<feature type="chain" id="PRO_0000182456" description="Heat-inducible transcription repressor HrcA">
    <location>
        <begin position="1"/>
        <end position="334"/>
    </location>
</feature>
<organism>
    <name type="scientific">Bordetella pertussis (strain Tohama I / ATCC BAA-589 / NCTC 13251)</name>
    <dbReference type="NCBI Taxonomy" id="257313"/>
    <lineage>
        <taxon>Bacteria</taxon>
        <taxon>Pseudomonadati</taxon>
        <taxon>Pseudomonadota</taxon>
        <taxon>Betaproteobacteria</taxon>
        <taxon>Burkholderiales</taxon>
        <taxon>Alcaligenaceae</taxon>
        <taxon>Bordetella</taxon>
    </lineage>
</organism>
<keyword id="KW-1185">Reference proteome</keyword>
<keyword id="KW-0678">Repressor</keyword>
<keyword id="KW-0346">Stress response</keyword>
<keyword id="KW-0804">Transcription</keyword>
<keyword id="KW-0805">Transcription regulation</keyword>
<proteinExistence type="inferred from homology"/>
<name>HRCA_BORPE</name>
<dbReference type="EMBL" id="BX640418">
    <property type="protein sequence ID" value="CAE42776.1"/>
    <property type="molecule type" value="Genomic_DNA"/>
</dbReference>
<dbReference type="RefSeq" id="NP_881131.1">
    <property type="nucleotide sequence ID" value="NC_002929.2"/>
</dbReference>
<dbReference type="RefSeq" id="WP_003814090.1">
    <property type="nucleotide sequence ID" value="NZ_CP039022.1"/>
</dbReference>
<dbReference type="SMR" id="Q7VVX7"/>
<dbReference type="STRING" id="257313.BP2504"/>
<dbReference type="PaxDb" id="257313-BP2504"/>
<dbReference type="DNASU" id="2665655"/>
<dbReference type="GeneID" id="93205276"/>
<dbReference type="KEGG" id="bpe:BP2504"/>
<dbReference type="PATRIC" id="fig|257313.5.peg.2702"/>
<dbReference type="eggNOG" id="COG1420">
    <property type="taxonomic scope" value="Bacteria"/>
</dbReference>
<dbReference type="HOGENOM" id="CLU_050019_0_0_4"/>
<dbReference type="Proteomes" id="UP000002676">
    <property type="component" value="Chromosome"/>
</dbReference>
<dbReference type="GO" id="GO:0003677">
    <property type="term" value="F:DNA binding"/>
    <property type="evidence" value="ECO:0007669"/>
    <property type="project" value="InterPro"/>
</dbReference>
<dbReference type="GO" id="GO:0045892">
    <property type="term" value="P:negative regulation of DNA-templated transcription"/>
    <property type="evidence" value="ECO:0007669"/>
    <property type="project" value="UniProtKB-UniRule"/>
</dbReference>
<dbReference type="Gene3D" id="3.30.450.40">
    <property type="match status" value="1"/>
</dbReference>
<dbReference type="Gene3D" id="3.30.390.60">
    <property type="entry name" value="Heat-inducible transcription repressor hrca homolog, domain 3"/>
    <property type="match status" value="1"/>
</dbReference>
<dbReference type="Gene3D" id="1.10.10.10">
    <property type="entry name" value="Winged helix-like DNA-binding domain superfamily/Winged helix DNA-binding domain"/>
    <property type="match status" value="1"/>
</dbReference>
<dbReference type="HAMAP" id="MF_00081">
    <property type="entry name" value="HrcA"/>
    <property type="match status" value="1"/>
</dbReference>
<dbReference type="InterPro" id="IPR029016">
    <property type="entry name" value="GAF-like_dom_sf"/>
</dbReference>
<dbReference type="InterPro" id="IPR002571">
    <property type="entry name" value="HrcA"/>
</dbReference>
<dbReference type="InterPro" id="IPR021153">
    <property type="entry name" value="HrcA_C"/>
</dbReference>
<dbReference type="InterPro" id="IPR036388">
    <property type="entry name" value="WH-like_DNA-bd_sf"/>
</dbReference>
<dbReference type="InterPro" id="IPR036390">
    <property type="entry name" value="WH_DNA-bd_sf"/>
</dbReference>
<dbReference type="InterPro" id="IPR005104">
    <property type="entry name" value="WHTH_HrcA_DNA-bd"/>
</dbReference>
<dbReference type="InterPro" id="IPR023120">
    <property type="entry name" value="WHTH_transcript_rep_HrcA_IDD"/>
</dbReference>
<dbReference type="NCBIfam" id="TIGR00331">
    <property type="entry name" value="hrcA"/>
    <property type="match status" value="1"/>
</dbReference>
<dbReference type="PANTHER" id="PTHR34824">
    <property type="entry name" value="HEAT-INDUCIBLE TRANSCRIPTION REPRESSOR HRCA"/>
    <property type="match status" value="1"/>
</dbReference>
<dbReference type="PANTHER" id="PTHR34824:SF1">
    <property type="entry name" value="HEAT-INDUCIBLE TRANSCRIPTION REPRESSOR HRCA"/>
    <property type="match status" value="1"/>
</dbReference>
<dbReference type="Pfam" id="PF01628">
    <property type="entry name" value="HrcA"/>
    <property type="match status" value="1"/>
</dbReference>
<dbReference type="Pfam" id="PF03444">
    <property type="entry name" value="HrcA_DNA-bdg"/>
    <property type="match status" value="1"/>
</dbReference>
<dbReference type="PIRSF" id="PIRSF005485">
    <property type="entry name" value="HrcA"/>
    <property type="match status" value="1"/>
</dbReference>
<dbReference type="SUPFAM" id="SSF55781">
    <property type="entry name" value="GAF domain-like"/>
    <property type="match status" value="1"/>
</dbReference>
<dbReference type="SUPFAM" id="SSF46785">
    <property type="entry name" value="Winged helix' DNA-binding domain"/>
    <property type="match status" value="1"/>
</dbReference>
<reference key="1">
    <citation type="journal article" date="2003" name="Nat. Genet.">
        <title>Comparative analysis of the genome sequences of Bordetella pertussis, Bordetella parapertussis and Bordetella bronchiseptica.</title>
        <authorList>
            <person name="Parkhill J."/>
            <person name="Sebaihia M."/>
            <person name="Preston A."/>
            <person name="Murphy L.D."/>
            <person name="Thomson N.R."/>
            <person name="Harris D.E."/>
            <person name="Holden M.T.G."/>
            <person name="Churcher C.M."/>
            <person name="Bentley S.D."/>
            <person name="Mungall K.L."/>
            <person name="Cerdeno-Tarraga A.-M."/>
            <person name="Temple L."/>
            <person name="James K.D."/>
            <person name="Harris B."/>
            <person name="Quail M.A."/>
            <person name="Achtman M."/>
            <person name="Atkin R."/>
            <person name="Baker S."/>
            <person name="Basham D."/>
            <person name="Bason N."/>
            <person name="Cherevach I."/>
            <person name="Chillingworth T."/>
            <person name="Collins M."/>
            <person name="Cronin A."/>
            <person name="Davis P."/>
            <person name="Doggett J."/>
            <person name="Feltwell T."/>
            <person name="Goble A."/>
            <person name="Hamlin N."/>
            <person name="Hauser H."/>
            <person name="Holroyd S."/>
            <person name="Jagels K."/>
            <person name="Leather S."/>
            <person name="Moule S."/>
            <person name="Norberczak H."/>
            <person name="O'Neil S."/>
            <person name="Ormond D."/>
            <person name="Price C."/>
            <person name="Rabbinowitsch E."/>
            <person name="Rutter S."/>
            <person name="Sanders M."/>
            <person name="Saunders D."/>
            <person name="Seeger K."/>
            <person name="Sharp S."/>
            <person name="Simmonds M."/>
            <person name="Skelton J."/>
            <person name="Squares R."/>
            <person name="Squares S."/>
            <person name="Stevens K."/>
            <person name="Unwin L."/>
            <person name="Whitehead S."/>
            <person name="Barrell B.G."/>
            <person name="Maskell D.J."/>
        </authorList>
    </citation>
    <scope>NUCLEOTIDE SEQUENCE [LARGE SCALE GENOMIC DNA]</scope>
    <source>
        <strain>Tohama I / ATCC BAA-589 / NCTC 13251</strain>
    </source>
</reference>
<comment type="function">
    <text evidence="1">Negative regulator of class I heat shock genes (grpE-dnaK-dnaJ and groELS operons). Prevents heat-shock induction of these operons.</text>
</comment>
<comment type="similarity">
    <text evidence="1">Belongs to the HrcA family.</text>
</comment>
<sequence length="334" mass="36657">MDDRARALLKALIERYIADGQPVGSRTLSKVFDLSPATIRNVMADLEELGLIHSPHTSAGRVPTPRGYRMFVDSLLAVRAYQFEPAHIGELLPVSEPSRAVNAAAALLSNLTQFAGVVLTPKRTQIFRQIEFIRLSDKRVLLIIVTPEGDVQNRILSAQRDYTEAELLEAGNFFNVHFSGKSFDAVRRTLSTELAQLRDDISRLMQAAVEAGAEAADDGEAVVISGERKLLDVTDIASDMDRLRKMFSLFEKKTDLLQLLDVSSRAQGVQIYIGGDSQLVPMEEVSVITAPYGVDGKVIGTLGVIGPTRMAYERVIPIVDITARLLSNALSHNQ</sequence>
<evidence type="ECO:0000255" key="1">
    <source>
        <dbReference type="HAMAP-Rule" id="MF_00081"/>
    </source>
</evidence>
<protein>
    <recommendedName>
        <fullName evidence="1">Heat-inducible transcription repressor HrcA</fullName>
    </recommendedName>
</protein>
<gene>
    <name evidence="1" type="primary">hrcA</name>
    <name type="ordered locus">BP2504</name>
</gene>
<accession>Q7VVX7</accession>